<name>RLA2_PARAR</name>
<reference key="1">
    <citation type="journal article" date="1994" name="Plant Physiol.">
        <title>Nucleotide sequence of a cDNA for a P2 60S acidic ribosomal protein from Parthenium argentatum.</title>
        <authorList>
            <person name="Backhaus R.A."/>
            <person name="Kuntz M."/>
            <person name="Camara B."/>
            <person name="Bouvier F."/>
            <person name="Pan Z."/>
        </authorList>
    </citation>
    <scope>NUCLEOTIDE SEQUENCE [MRNA]</scope>
    <source>
        <strain>cv. Line 11591</strain>
        <tissue>Stem bark</tissue>
    </source>
</reference>
<comment type="function">
    <text>Plays an important role in the elongation step of protein synthesis.</text>
</comment>
<comment type="subunit">
    <text>P1 and P2 exist as dimers at the large ribosomal subunit.</text>
</comment>
<comment type="PTM">
    <text evidence="1">Phosphorylated.</text>
</comment>
<comment type="similarity">
    <text evidence="3">Belongs to the eukaryotic ribosomal protein P1/P2 family.</text>
</comment>
<feature type="chain" id="PRO_0000157664" description="Large ribosomal subunit protein P2">
    <location>
        <begin position="1"/>
        <end position="114"/>
    </location>
</feature>
<feature type="region of interest" description="Disordered" evidence="2">
    <location>
        <begin position="74"/>
        <end position="114"/>
    </location>
</feature>
<feature type="compositionally biased region" description="Gly residues" evidence="2">
    <location>
        <begin position="74"/>
        <end position="83"/>
    </location>
</feature>
<feature type="compositionally biased region" description="Acidic residues" evidence="2">
    <location>
        <begin position="98"/>
        <end position="114"/>
    </location>
</feature>
<sequence>MKVIAAFLLALLGGNTSPTDEDLKSILASVGADADDDKIELLLSQVKGKDITELIASGRERLASVPSGGGVAVAAAAGGGGGDAPAAAAEEPKKEEKSEEESDEELGFSLFDDN</sequence>
<proteinExistence type="inferred from homology"/>
<dbReference type="EMBL" id="X78213">
    <property type="protein sequence ID" value="CAA55047.1"/>
    <property type="molecule type" value="mRNA"/>
</dbReference>
<dbReference type="SMR" id="P41099"/>
<dbReference type="GO" id="GO:0022625">
    <property type="term" value="C:cytosolic large ribosomal subunit"/>
    <property type="evidence" value="ECO:0007669"/>
    <property type="project" value="InterPro"/>
</dbReference>
<dbReference type="GO" id="GO:0003735">
    <property type="term" value="F:structural constituent of ribosome"/>
    <property type="evidence" value="ECO:0007669"/>
    <property type="project" value="InterPro"/>
</dbReference>
<dbReference type="GO" id="GO:0002182">
    <property type="term" value="P:cytoplasmic translational elongation"/>
    <property type="evidence" value="ECO:0007669"/>
    <property type="project" value="InterPro"/>
</dbReference>
<dbReference type="CDD" id="cd05833">
    <property type="entry name" value="Ribosomal_P2"/>
    <property type="match status" value="1"/>
</dbReference>
<dbReference type="FunFam" id="1.10.10.1410:FF:000002">
    <property type="entry name" value="60S acidic ribosomal protein P2"/>
    <property type="match status" value="1"/>
</dbReference>
<dbReference type="Gene3D" id="1.10.10.1410">
    <property type="match status" value="1"/>
</dbReference>
<dbReference type="HAMAP" id="MF_01478">
    <property type="entry name" value="Ribosomal_L12_arch"/>
    <property type="match status" value="1"/>
</dbReference>
<dbReference type="InterPro" id="IPR038716">
    <property type="entry name" value="P1/P2_N_sf"/>
</dbReference>
<dbReference type="InterPro" id="IPR027534">
    <property type="entry name" value="Ribosomal_P1/P2"/>
</dbReference>
<dbReference type="InterPro" id="IPR044076">
    <property type="entry name" value="Ribosomal_P2"/>
</dbReference>
<dbReference type="PANTHER" id="PTHR21141">
    <property type="entry name" value="60S ACIDIC RIBOSOMAL PROTEIN FAMILY MEMBER"/>
    <property type="match status" value="1"/>
</dbReference>
<dbReference type="PANTHER" id="PTHR21141:SF5">
    <property type="entry name" value="LARGE RIBOSOMAL SUBUNIT PROTEIN P2"/>
    <property type="match status" value="1"/>
</dbReference>
<dbReference type="Pfam" id="PF00428">
    <property type="entry name" value="Ribosomal_60s"/>
    <property type="match status" value="1"/>
</dbReference>
<keyword id="KW-0597">Phosphoprotein</keyword>
<keyword id="KW-0687">Ribonucleoprotein</keyword>
<keyword id="KW-0689">Ribosomal protein</keyword>
<protein>
    <recommendedName>
        <fullName evidence="3">Large ribosomal subunit protein P2</fullName>
    </recommendedName>
    <alternativeName>
        <fullName>60S acidic ribosomal protein P2</fullName>
    </alternativeName>
</protein>
<evidence type="ECO:0000250" key="1"/>
<evidence type="ECO:0000256" key="2">
    <source>
        <dbReference type="SAM" id="MobiDB-lite"/>
    </source>
</evidence>
<evidence type="ECO:0000305" key="3"/>
<organism>
    <name type="scientific">Parthenium argentatum</name>
    <name type="common">Guayule rubber plant</name>
    <dbReference type="NCBI Taxonomy" id="35935"/>
    <lineage>
        <taxon>Eukaryota</taxon>
        <taxon>Viridiplantae</taxon>
        <taxon>Streptophyta</taxon>
        <taxon>Embryophyta</taxon>
        <taxon>Tracheophyta</taxon>
        <taxon>Spermatophyta</taxon>
        <taxon>Magnoliopsida</taxon>
        <taxon>eudicotyledons</taxon>
        <taxon>Gunneridae</taxon>
        <taxon>Pentapetalae</taxon>
        <taxon>asterids</taxon>
        <taxon>campanulids</taxon>
        <taxon>Asterales</taxon>
        <taxon>Asteraceae</taxon>
        <taxon>Asteroideae</taxon>
        <taxon>Heliantheae alliance</taxon>
        <taxon>Heliantheae</taxon>
        <taxon>Parthenium</taxon>
    </lineage>
</organism>
<accession>P41099</accession>